<protein>
    <recommendedName>
        <fullName evidence="1">Large ribosomal subunit protein uL6</fullName>
    </recommendedName>
    <alternativeName>
        <fullName evidence="2">50S ribosomal protein L6</fullName>
    </alternativeName>
</protein>
<reference key="1">
    <citation type="submission" date="2006-05" db="EMBL/GenBank/DDBJ databases">
        <authorList>
            <consortium name="Genoscope"/>
        </authorList>
    </citation>
    <scope>NUCLEOTIDE SEQUENCE [LARGE SCALE GENOMIC DNA]</scope>
    <source>
        <strain>RCC307</strain>
    </source>
</reference>
<feature type="chain" id="PRO_1000055324" description="Large ribosomal subunit protein uL6">
    <location>
        <begin position="1"/>
        <end position="179"/>
    </location>
</feature>
<accession>A5GVX4</accession>
<comment type="function">
    <text evidence="1">This protein binds to the 23S rRNA, and is important in its secondary structure. It is located near the subunit interface in the base of the L7/L12 stalk, and near the tRNA binding site of the peptidyltransferase center.</text>
</comment>
<comment type="subunit">
    <text evidence="1">Part of the 50S ribosomal subunit.</text>
</comment>
<comment type="similarity">
    <text evidence="1">Belongs to the universal ribosomal protein uL6 family.</text>
</comment>
<evidence type="ECO:0000255" key="1">
    <source>
        <dbReference type="HAMAP-Rule" id="MF_01365"/>
    </source>
</evidence>
<evidence type="ECO:0000305" key="2"/>
<sequence>MSRIGKNPVPIPEKVSVEISGLTVKVKGPKGELERVLPDGVSVSQADNAVTVSPSDTSRRSRERHGLCRTLVANMVEGVSKGFSKKLEIIGVGYRAQVKGKKLVVSAGYSHPVEMDAPEGVTFAVENNTLVTVSGADKELVGNEAAKVRGIRPPEPYKGKGIKYQGERILRKAGKTGKK</sequence>
<gene>
    <name evidence="1" type="primary">rplF</name>
    <name evidence="1" type="synonym">rpl6</name>
    <name type="ordered locus">SynRCC307_2130</name>
</gene>
<keyword id="KW-1185">Reference proteome</keyword>
<keyword id="KW-0687">Ribonucleoprotein</keyword>
<keyword id="KW-0689">Ribosomal protein</keyword>
<keyword id="KW-0694">RNA-binding</keyword>
<keyword id="KW-0699">rRNA-binding</keyword>
<proteinExistence type="inferred from homology"/>
<dbReference type="EMBL" id="CT978603">
    <property type="protein sequence ID" value="CAK29033.1"/>
    <property type="molecule type" value="Genomic_DNA"/>
</dbReference>
<dbReference type="SMR" id="A5GVX4"/>
<dbReference type="STRING" id="316278.SynRCC307_2130"/>
<dbReference type="KEGG" id="syr:SynRCC307_2130"/>
<dbReference type="eggNOG" id="COG0097">
    <property type="taxonomic scope" value="Bacteria"/>
</dbReference>
<dbReference type="HOGENOM" id="CLU_065464_1_2_3"/>
<dbReference type="OrthoDB" id="9805007at2"/>
<dbReference type="Proteomes" id="UP000001115">
    <property type="component" value="Chromosome"/>
</dbReference>
<dbReference type="GO" id="GO:0022625">
    <property type="term" value="C:cytosolic large ribosomal subunit"/>
    <property type="evidence" value="ECO:0007669"/>
    <property type="project" value="TreeGrafter"/>
</dbReference>
<dbReference type="GO" id="GO:0019843">
    <property type="term" value="F:rRNA binding"/>
    <property type="evidence" value="ECO:0007669"/>
    <property type="project" value="UniProtKB-UniRule"/>
</dbReference>
<dbReference type="GO" id="GO:0003735">
    <property type="term" value="F:structural constituent of ribosome"/>
    <property type="evidence" value="ECO:0007669"/>
    <property type="project" value="InterPro"/>
</dbReference>
<dbReference type="GO" id="GO:0002181">
    <property type="term" value="P:cytoplasmic translation"/>
    <property type="evidence" value="ECO:0007669"/>
    <property type="project" value="TreeGrafter"/>
</dbReference>
<dbReference type="FunFam" id="3.90.930.12:FF:000001">
    <property type="entry name" value="50S ribosomal protein L6"/>
    <property type="match status" value="1"/>
</dbReference>
<dbReference type="FunFam" id="3.90.930.12:FF:000002">
    <property type="entry name" value="50S ribosomal protein L6"/>
    <property type="match status" value="1"/>
</dbReference>
<dbReference type="Gene3D" id="3.90.930.12">
    <property type="entry name" value="Ribosomal protein L6, alpha-beta domain"/>
    <property type="match status" value="2"/>
</dbReference>
<dbReference type="HAMAP" id="MF_01365_B">
    <property type="entry name" value="Ribosomal_uL6_B"/>
    <property type="match status" value="1"/>
</dbReference>
<dbReference type="InterPro" id="IPR000702">
    <property type="entry name" value="Ribosomal_uL6-like"/>
</dbReference>
<dbReference type="InterPro" id="IPR036789">
    <property type="entry name" value="Ribosomal_uL6-like_a/b-dom_sf"/>
</dbReference>
<dbReference type="InterPro" id="IPR020040">
    <property type="entry name" value="Ribosomal_uL6_a/b-dom"/>
</dbReference>
<dbReference type="InterPro" id="IPR019906">
    <property type="entry name" value="Ribosomal_uL6_bac-type"/>
</dbReference>
<dbReference type="InterPro" id="IPR002358">
    <property type="entry name" value="Ribosomal_uL6_CS"/>
</dbReference>
<dbReference type="NCBIfam" id="TIGR03654">
    <property type="entry name" value="L6_bact"/>
    <property type="match status" value="1"/>
</dbReference>
<dbReference type="PANTHER" id="PTHR11655">
    <property type="entry name" value="60S/50S RIBOSOMAL PROTEIN L6/L9"/>
    <property type="match status" value="1"/>
</dbReference>
<dbReference type="PANTHER" id="PTHR11655:SF14">
    <property type="entry name" value="LARGE RIBOSOMAL SUBUNIT PROTEIN UL6M"/>
    <property type="match status" value="1"/>
</dbReference>
<dbReference type="Pfam" id="PF00347">
    <property type="entry name" value="Ribosomal_L6"/>
    <property type="match status" value="2"/>
</dbReference>
<dbReference type="PIRSF" id="PIRSF002162">
    <property type="entry name" value="Ribosomal_L6"/>
    <property type="match status" value="1"/>
</dbReference>
<dbReference type="PRINTS" id="PR00059">
    <property type="entry name" value="RIBOSOMALL6"/>
</dbReference>
<dbReference type="SUPFAM" id="SSF56053">
    <property type="entry name" value="Ribosomal protein L6"/>
    <property type="match status" value="2"/>
</dbReference>
<dbReference type="PROSITE" id="PS00525">
    <property type="entry name" value="RIBOSOMAL_L6_1"/>
    <property type="match status" value="1"/>
</dbReference>
<organism>
    <name type="scientific">Synechococcus sp. (strain RCC307)</name>
    <dbReference type="NCBI Taxonomy" id="316278"/>
    <lineage>
        <taxon>Bacteria</taxon>
        <taxon>Bacillati</taxon>
        <taxon>Cyanobacteriota</taxon>
        <taxon>Cyanophyceae</taxon>
        <taxon>Synechococcales</taxon>
        <taxon>Synechococcaceae</taxon>
        <taxon>Synechococcus</taxon>
    </lineage>
</organism>
<name>RL6_SYNR3</name>